<protein>
    <recommendedName>
        <fullName evidence="1">Thymidylate synthase</fullName>
        <shortName evidence="1">TS</shortName>
        <shortName evidence="1">TSase</shortName>
        <ecNumber evidence="1">2.1.1.45</ecNumber>
    </recommendedName>
</protein>
<comment type="function">
    <text evidence="1">Catalyzes the reductive methylation of 2'-deoxyuridine-5'-monophosphate (dUMP) to 2'-deoxythymidine-5'-monophosphate (dTMP) while utilizing 5,10-methylenetetrahydrofolate (mTHF) as the methyl donor and reductant in the reaction, yielding dihydrofolate (DHF) as a by-product. This enzymatic reaction provides an intracellular de novo source of dTMP, an essential precursor for DNA biosynthesis.</text>
</comment>
<comment type="catalytic activity">
    <reaction evidence="1">
        <text>dUMP + (6R)-5,10-methylene-5,6,7,8-tetrahydrofolate = 7,8-dihydrofolate + dTMP</text>
        <dbReference type="Rhea" id="RHEA:12104"/>
        <dbReference type="ChEBI" id="CHEBI:15636"/>
        <dbReference type="ChEBI" id="CHEBI:57451"/>
        <dbReference type="ChEBI" id="CHEBI:63528"/>
        <dbReference type="ChEBI" id="CHEBI:246422"/>
        <dbReference type="EC" id="2.1.1.45"/>
    </reaction>
</comment>
<comment type="pathway">
    <text evidence="1">Pyrimidine metabolism; dTTP biosynthesis.</text>
</comment>
<comment type="subunit">
    <text evidence="1">Homodimer.</text>
</comment>
<comment type="subcellular location">
    <subcellularLocation>
        <location evidence="1">Cytoplasm</location>
    </subcellularLocation>
</comment>
<comment type="similarity">
    <text evidence="1">Belongs to the thymidylate synthase family. Bacterial-type ThyA subfamily.</text>
</comment>
<name>TYSY_HAEIE</name>
<feature type="chain" id="PRO_1000000605" description="Thymidylate synthase">
    <location>
        <begin position="1"/>
        <end position="283"/>
    </location>
</feature>
<feature type="active site" description="Nucleophile" evidence="1">
    <location>
        <position position="160"/>
    </location>
</feature>
<feature type="binding site" evidence="1">
    <location>
        <position position="22"/>
    </location>
    <ligand>
        <name>dUMP</name>
        <dbReference type="ChEBI" id="CHEBI:246422"/>
    </ligand>
</feature>
<feature type="binding site" evidence="1">
    <location>
        <begin position="180"/>
        <end position="183"/>
    </location>
    <ligand>
        <name>dUMP</name>
        <dbReference type="ChEBI" id="CHEBI:246422"/>
    </ligand>
</feature>
<feature type="binding site" evidence="1">
    <location>
        <position position="183"/>
    </location>
    <ligand>
        <name>(6R)-5,10-methylene-5,6,7,8-tetrahydrofolate</name>
        <dbReference type="ChEBI" id="CHEBI:15636"/>
    </ligand>
</feature>
<feature type="binding site" evidence="1">
    <location>
        <position position="191"/>
    </location>
    <ligand>
        <name>dUMP</name>
        <dbReference type="ChEBI" id="CHEBI:246422"/>
    </ligand>
</feature>
<feature type="binding site" evidence="1">
    <location>
        <begin position="221"/>
        <end position="223"/>
    </location>
    <ligand>
        <name>dUMP</name>
        <dbReference type="ChEBI" id="CHEBI:246422"/>
    </ligand>
</feature>
<feature type="binding site" evidence="1">
    <location>
        <position position="282"/>
    </location>
    <ligand>
        <name>(6R)-5,10-methylene-5,6,7,8-tetrahydrofolate</name>
        <dbReference type="ChEBI" id="CHEBI:15636"/>
    </ligand>
</feature>
<keyword id="KW-0963">Cytoplasm</keyword>
<keyword id="KW-0489">Methyltransferase</keyword>
<keyword id="KW-0545">Nucleotide biosynthesis</keyword>
<keyword id="KW-0808">Transferase</keyword>
<proteinExistence type="inferred from homology"/>
<gene>
    <name evidence="1" type="primary">thyA</name>
    <name type="ordered locus">CGSHiEE_07490</name>
</gene>
<dbReference type="EC" id="2.1.1.45" evidence="1"/>
<dbReference type="EMBL" id="CP000671">
    <property type="protein sequence ID" value="ABQ98821.1"/>
    <property type="molecule type" value="Genomic_DNA"/>
</dbReference>
<dbReference type="SMR" id="A5UDH0"/>
<dbReference type="KEGG" id="hip:CGSHiEE_07490"/>
<dbReference type="HOGENOM" id="CLU_021669_0_1_6"/>
<dbReference type="UniPathway" id="UPA00575"/>
<dbReference type="GO" id="GO:0005829">
    <property type="term" value="C:cytosol"/>
    <property type="evidence" value="ECO:0007669"/>
    <property type="project" value="TreeGrafter"/>
</dbReference>
<dbReference type="GO" id="GO:0004799">
    <property type="term" value="F:thymidylate synthase activity"/>
    <property type="evidence" value="ECO:0007669"/>
    <property type="project" value="UniProtKB-UniRule"/>
</dbReference>
<dbReference type="GO" id="GO:0006231">
    <property type="term" value="P:dTMP biosynthetic process"/>
    <property type="evidence" value="ECO:0007669"/>
    <property type="project" value="UniProtKB-UniRule"/>
</dbReference>
<dbReference type="GO" id="GO:0006235">
    <property type="term" value="P:dTTP biosynthetic process"/>
    <property type="evidence" value="ECO:0007669"/>
    <property type="project" value="UniProtKB-UniRule"/>
</dbReference>
<dbReference type="GO" id="GO:0032259">
    <property type="term" value="P:methylation"/>
    <property type="evidence" value="ECO:0007669"/>
    <property type="project" value="UniProtKB-KW"/>
</dbReference>
<dbReference type="CDD" id="cd00351">
    <property type="entry name" value="TS_Pyrimidine_HMase"/>
    <property type="match status" value="1"/>
</dbReference>
<dbReference type="FunFam" id="3.30.572.10:FF:000003">
    <property type="entry name" value="Thymidylate synthase"/>
    <property type="match status" value="1"/>
</dbReference>
<dbReference type="Gene3D" id="3.30.572.10">
    <property type="entry name" value="Thymidylate synthase/dCMP hydroxymethylase domain"/>
    <property type="match status" value="1"/>
</dbReference>
<dbReference type="HAMAP" id="MF_00008">
    <property type="entry name" value="Thymidy_synth_bact"/>
    <property type="match status" value="1"/>
</dbReference>
<dbReference type="InterPro" id="IPR045097">
    <property type="entry name" value="Thymidate_synth/dCMP_Mease"/>
</dbReference>
<dbReference type="InterPro" id="IPR023451">
    <property type="entry name" value="Thymidate_synth/dCMP_Mease_dom"/>
</dbReference>
<dbReference type="InterPro" id="IPR036926">
    <property type="entry name" value="Thymidate_synth/dCMP_Mease_sf"/>
</dbReference>
<dbReference type="InterPro" id="IPR000398">
    <property type="entry name" value="Thymidylate_synthase"/>
</dbReference>
<dbReference type="InterPro" id="IPR020940">
    <property type="entry name" value="Thymidylate_synthase_AS"/>
</dbReference>
<dbReference type="NCBIfam" id="NF002498">
    <property type="entry name" value="PRK01827.1-4"/>
    <property type="match status" value="1"/>
</dbReference>
<dbReference type="NCBIfam" id="TIGR03284">
    <property type="entry name" value="thym_sym"/>
    <property type="match status" value="1"/>
</dbReference>
<dbReference type="PANTHER" id="PTHR11548:SF9">
    <property type="entry name" value="THYMIDYLATE SYNTHASE"/>
    <property type="match status" value="1"/>
</dbReference>
<dbReference type="PANTHER" id="PTHR11548">
    <property type="entry name" value="THYMIDYLATE SYNTHASE 1"/>
    <property type="match status" value="1"/>
</dbReference>
<dbReference type="Pfam" id="PF00303">
    <property type="entry name" value="Thymidylat_synt"/>
    <property type="match status" value="1"/>
</dbReference>
<dbReference type="PRINTS" id="PR00108">
    <property type="entry name" value="THYMDSNTHASE"/>
</dbReference>
<dbReference type="SUPFAM" id="SSF55831">
    <property type="entry name" value="Thymidylate synthase/dCMP hydroxymethylase"/>
    <property type="match status" value="1"/>
</dbReference>
<dbReference type="PROSITE" id="PS00091">
    <property type="entry name" value="THYMIDYLATE_SYNTHASE"/>
    <property type="match status" value="1"/>
</dbReference>
<reference key="1">
    <citation type="journal article" date="2007" name="Genome Biol.">
        <title>Characterization and modeling of the Haemophilus influenzae core and supragenomes based on the complete genomic sequences of Rd and 12 clinical nontypeable strains.</title>
        <authorList>
            <person name="Hogg J.S."/>
            <person name="Hu F.Z."/>
            <person name="Janto B."/>
            <person name="Boissy R."/>
            <person name="Hayes J."/>
            <person name="Keefe R."/>
            <person name="Post J.C."/>
            <person name="Ehrlich G.D."/>
        </authorList>
    </citation>
    <scope>NUCLEOTIDE SEQUENCE [LARGE SCALE GENOMIC DNA]</scope>
    <source>
        <strain>PittEE</strain>
    </source>
</reference>
<sequence length="283" mass="32479">MKQYLELCRRIVSEGEWVANERTGKRCLTVINADLEYDVANNQFPLITTRKSYWKAAIAEFLGYIRGYDNAADFRALGTKTWDANANENAAWLANPHRRGVDDMGRVYGVQGRAWRKPNGETIDQLRKIVNNLTKGIDDRGEILTFFNPGEFDLGCLRPCMHTHTFSLVGDTLHLTSYQRSCDVPLGLNFNQIQVFTFLALMAQITGKKAGKAYHKIVNAHIYEDQLELMRDVQLKREPFPLPKLEINPDIKTLEDLETWVTMDDFKVVGYQSHEPIKYPFSV</sequence>
<evidence type="ECO:0000255" key="1">
    <source>
        <dbReference type="HAMAP-Rule" id="MF_00008"/>
    </source>
</evidence>
<organism>
    <name type="scientific">Haemophilus influenzae (strain PittEE)</name>
    <dbReference type="NCBI Taxonomy" id="374930"/>
    <lineage>
        <taxon>Bacteria</taxon>
        <taxon>Pseudomonadati</taxon>
        <taxon>Pseudomonadota</taxon>
        <taxon>Gammaproteobacteria</taxon>
        <taxon>Pasteurellales</taxon>
        <taxon>Pasteurellaceae</taxon>
        <taxon>Haemophilus</taxon>
    </lineage>
</organism>
<accession>A5UDH0</accession>